<name>RPOA_ANASK</name>
<comment type="function">
    <text evidence="1">DNA-dependent RNA polymerase catalyzes the transcription of DNA into RNA using the four ribonucleoside triphosphates as substrates.</text>
</comment>
<comment type="catalytic activity">
    <reaction evidence="1">
        <text>RNA(n) + a ribonucleoside 5'-triphosphate = RNA(n+1) + diphosphate</text>
        <dbReference type="Rhea" id="RHEA:21248"/>
        <dbReference type="Rhea" id="RHEA-COMP:14527"/>
        <dbReference type="Rhea" id="RHEA-COMP:17342"/>
        <dbReference type="ChEBI" id="CHEBI:33019"/>
        <dbReference type="ChEBI" id="CHEBI:61557"/>
        <dbReference type="ChEBI" id="CHEBI:140395"/>
        <dbReference type="EC" id="2.7.7.6"/>
    </reaction>
</comment>
<comment type="subunit">
    <text evidence="1">Homodimer. The RNAP catalytic core consists of 2 alpha, 1 beta, 1 beta' and 1 omega subunit. When a sigma factor is associated with the core the holoenzyme is formed, which can initiate transcription.</text>
</comment>
<comment type="domain">
    <text evidence="1">The N-terminal domain is essential for RNAP assembly and basal transcription, whereas the C-terminal domain is involved in interaction with transcriptional regulators and with upstream promoter elements.</text>
</comment>
<comment type="similarity">
    <text evidence="1">Belongs to the RNA polymerase alpha chain family.</text>
</comment>
<keyword id="KW-0240">DNA-directed RNA polymerase</keyword>
<keyword id="KW-0548">Nucleotidyltransferase</keyword>
<keyword id="KW-0804">Transcription</keyword>
<keyword id="KW-0808">Transferase</keyword>
<sequence>MVDPIVTKNWRDLIKPRGLVVDQDSLSNTYGKFVAEPLERGFGITLGNSLRRVLLSSLQGAAITSVKVEGVEHEFMTIPEVAEDVTDIILNLKEVLLQIHTNDVKTIRIEADGPKEIKAGDLITDAQVEVLNPGHHILTISEGGRVRAEMTARRGRGYVPAERNKIPGSPIGTIPIDALFSPIRKVNYQVTNARVGQQTDYDKLTLEVWTDGSVAPADAVAFAAKIVKEQLSIFINFDEAEEPAEEIKPVEEQKLNENLFRSVDELELSVRSANCLQNANIKTIGDLVQKTEAEMLKTKNFGRKSLKEIKEILAEMGLSLGMKLENWPPKAAPQGGAPKV</sequence>
<dbReference type="EC" id="2.7.7.6" evidence="1"/>
<dbReference type="EMBL" id="CP001131">
    <property type="protein sequence ID" value="ACG73188.1"/>
    <property type="molecule type" value="Genomic_DNA"/>
</dbReference>
<dbReference type="RefSeq" id="WP_012525990.1">
    <property type="nucleotide sequence ID" value="NC_011145.1"/>
</dbReference>
<dbReference type="SMR" id="B4UBC6"/>
<dbReference type="KEGG" id="ank:AnaeK_1960"/>
<dbReference type="HOGENOM" id="CLU_053084_0_1_7"/>
<dbReference type="OrthoDB" id="9805706at2"/>
<dbReference type="Proteomes" id="UP000001871">
    <property type="component" value="Chromosome"/>
</dbReference>
<dbReference type="GO" id="GO:0005737">
    <property type="term" value="C:cytoplasm"/>
    <property type="evidence" value="ECO:0007669"/>
    <property type="project" value="UniProtKB-ARBA"/>
</dbReference>
<dbReference type="GO" id="GO:0000428">
    <property type="term" value="C:DNA-directed RNA polymerase complex"/>
    <property type="evidence" value="ECO:0007669"/>
    <property type="project" value="UniProtKB-KW"/>
</dbReference>
<dbReference type="GO" id="GO:0003677">
    <property type="term" value="F:DNA binding"/>
    <property type="evidence" value="ECO:0007669"/>
    <property type="project" value="UniProtKB-UniRule"/>
</dbReference>
<dbReference type="GO" id="GO:0003899">
    <property type="term" value="F:DNA-directed RNA polymerase activity"/>
    <property type="evidence" value="ECO:0007669"/>
    <property type="project" value="UniProtKB-UniRule"/>
</dbReference>
<dbReference type="GO" id="GO:0046983">
    <property type="term" value="F:protein dimerization activity"/>
    <property type="evidence" value="ECO:0007669"/>
    <property type="project" value="InterPro"/>
</dbReference>
<dbReference type="GO" id="GO:0006351">
    <property type="term" value="P:DNA-templated transcription"/>
    <property type="evidence" value="ECO:0007669"/>
    <property type="project" value="UniProtKB-UniRule"/>
</dbReference>
<dbReference type="CDD" id="cd06928">
    <property type="entry name" value="RNAP_alpha_NTD"/>
    <property type="match status" value="1"/>
</dbReference>
<dbReference type="FunFam" id="1.10.150.20:FF:000001">
    <property type="entry name" value="DNA-directed RNA polymerase subunit alpha"/>
    <property type="match status" value="1"/>
</dbReference>
<dbReference type="FunFam" id="2.170.120.12:FF:000001">
    <property type="entry name" value="DNA-directed RNA polymerase subunit alpha"/>
    <property type="match status" value="1"/>
</dbReference>
<dbReference type="Gene3D" id="1.10.150.20">
    <property type="entry name" value="5' to 3' exonuclease, C-terminal subdomain"/>
    <property type="match status" value="1"/>
</dbReference>
<dbReference type="Gene3D" id="2.170.120.12">
    <property type="entry name" value="DNA-directed RNA polymerase, insert domain"/>
    <property type="match status" value="1"/>
</dbReference>
<dbReference type="Gene3D" id="3.30.1360.10">
    <property type="entry name" value="RNA polymerase, RBP11-like subunit"/>
    <property type="match status" value="1"/>
</dbReference>
<dbReference type="HAMAP" id="MF_00059">
    <property type="entry name" value="RNApol_bact_RpoA"/>
    <property type="match status" value="1"/>
</dbReference>
<dbReference type="InterPro" id="IPR011262">
    <property type="entry name" value="DNA-dir_RNA_pol_insert"/>
</dbReference>
<dbReference type="InterPro" id="IPR011263">
    <property type="entry name" value="DNA-dir_RNA_pol_RpoA/D/Rpb3"/>
</dbReference>
<dbReference type="InterPro" id="IPR011773">
    <property type="entry name" value="DNA-dir_RpoA"/>
</dbReference>
<dbReference type="InterPro" id="IPR036603">
    <property type="entry name" value="RBP11-like"/>
</dbReference>
<dbReference type="InterPro" id="IPR011260">
    <property type="entry name" value="RNAP_asu_C"/>
</dbReference>
<dbReference type="InterPro" id="IPR036643">
    <property type="entry name" value="RNApol_insert_sf"/>
</dbReference>
<dbReference type="NCBIfam" id="NF003513">
    <property type="entry name" value="PRK05182.1-2"/>
    <property type="match status" value="1"/>
</dbReference>
<dbReference type="NCBIfam" id="NF003515">
    <property type="entry name" value="PRK05182.2-1"/>
    <property type="match status" value="1"/>
</dbReference>
<dbReference type="NCBIfam" id="NF003519">
    <property type="entry name" value="PRK05182.2-5"/>
    <property type="match status" value="1"/>
</dbReference>
<dbReference type="NCBIfam" id="TIGR02027">
    <property type="entry name" value="rpoA"/>
    <property type="match status" value="1"/>
</dbReference>
<dbReference type="Pfam" id="PF01000">
    <property type="entry name" value="RNA_pol_A_bac"/>
    <property type="match status" value="1"/>
</dbReference>
<dbReference type="Pfam" id="PF03118">
    <property type="entry name" value="RNA_pol_A_CTD"/>
    <property type="match status" value="1"/>
</dbReference>
<dbReference type="Pfam" id="PF01193">
    <property type="entry name" value="RNA_pol_L"/>
    <property type="match status" value="1"/>
</dbReference>
<dbReference type="SMART" id="SM00662">
    <property type="entry name" value="RPOLD"/>
    <property type="match status" value="1"/>
</dbReference>
<dbReference type="SUPFAM" id="SSF47789">
    <property type="entry name" value="C-terminal domain of RNA polymerase alpha subunit"/>
    <property type="match status" value="1"/>
</dbReference>
<dbReference type="SUPFAM" id="SSF56553">
    <property type="entry name" value="Insert subdomain of RNA polymerase alpha subunit"/>
    <property type="match status" value="1"/>
</dbReference>
<dbReference type="SUPFAM" id="SSF55257">
    <property type="entry name" value="RBP11-like subunits of RNA polymerase"/>
    <property type="match status" value="1"/>
</dbReference>
<evidence type="ECO:0000255" key="1">
    <source>
        <dbReference type="HAMAP-Rule" id="MF_00059"/>
    </source>
</evidence>
<gene>
    <name evidence="1" type="primary">rpoA</name>
    <name type="ordered locus">AnaeK_1960</name>
</gene>
<feature type="chain" id="PRO_1000091922" description="DNA-directed RNA polymerase subunit alpha">
    <location>
        <begin position="1"/>
        <end position="340"/>
    </location>
</feature>
<feature type="region of interest" description="Alpha N-terminal domain (alpha-NTD)" evidence="1">
    <location>
        <begin position="1"/>
        <end position="238"/>
    </location>
</feature>
<feature type="region of interest" description="Alpha C-terminal domain (alpha-CTD)" evidence="1">
    <location>
        <begin position="255"/>
        <end position="340"/>
    </location>
</feature>
<accession>B4UBC6</accession>
<reference key="1">
    <citation type="submission" date="2008-08" db="EMBL/GenBank/DDBJ databases">
        <title>Complete sequence of Anaeromyxobacter sp. K.</title>
        <authorList>
            <consortium name="US DOE Joint Genome Institute"/>
            <person name="Lucas S."/>
            <person name="Copeland A."/>
            <person name="Lapidus A."/>
            <person name="Glavina del Rio T."/>
            <person name="Dalin E."/>
            <person name="Tice H."/>
            <person name="Bruce D."/>
            <person name="Goodwin L."/>
            <person name="Pitluck S."/>
            <person name="Saunders E."/>
            <person name="Brettin T."/>
            <person name="Detter J.C."/>
            <person name="Han C."/>
            <person name="Larimer F."/>
            <person name="Land M."/>
            <person name="Hauser L."/>
            <person name="Kyrpides N."/>
            <person name="Ovchinnikiva G."/>
            <person name="Beliaev A."/>
        </authorList>
    </citation>
    <scope>NUCLEOTIDE SEQUENCE [LARGE SCALE GENOMIC DNA]</scope>
    <source>
        <strain>K</strain>
    </source>
</reference>
<protein>
    <recommendedName>
        <fullName evidence="1">DNA-directed RNA polymerase subunit alpha</fullName>
        <shortName evidence="1">RNAP subunit alpha</shortName>
        <ecNumber evidence="1">2.7.7.6</ecNumber>
    </recommendedName>
    <alternativeName>
        <fullName evidence="1">RNA polymerase subunit alpha</fullName>
    </alternativeName>
    <alternativeName>
        <fullName evidence="1">Transcriptase subunit alpha</fullName>
    </alternativeName>
</protein>
<organism>
    <name type="scientific">Anaeromyxobacter sp. (strain K)</name>
    <dbReference type="NCBI Taxonomy" id="447217"/>
    <lineage>
        <taxon>Bacteria</taxon>
        <taxon>Pseudomonadati</taxon>
        <taxon>Myxococcota</taxon>
        <taxon>Myxococcia</taxon>
        <taxon>Myxococcales</taxon>
        <taxon>Cystobacterineae</taxon>
        <taxon>Anaeromyxobacteraceae</taxon>
        <taxon>Anaeromyxobacter</taxon>
    </lineage>
</organism>
<proteinExistence type="inferred from homology"/>